<keyword id="KW-0007">Acetylation</keyword>
<keyword id="KW-0963">Cytoplasm</keyword>
<keyword id="KW-0903">Direct protein sequencing</keyword>
<keyword id="KW-0333">Golgi apparatus</keyword>
<keyword id="KW-0443">Lipid metabolism</keyword>
<keyword id="KW-0496">Mitochondrion</keyword>
<keyword id="KW-0521">NADP</keyword>
<keyword id="KW-0560">Oxidoreductase</keyword>
<keyword id="KW-0597">Phosphoprotein</keyword>
<keyword id="KW-1185">Reference proteome</keyword>
<keyword id="KW-0809">Transit peptide</keyword>
<name>ARK72_RAT</name>
<comment type="function">
    <text evidence="5">Catalyzes the NADPH-dependent reduction of succinic semialdehyde to gamma-hydroxybutyrate. May have an important role in producing the neuromodulator gamma-hydroxybutyrate (GHB). Has broad substrate specificity. Can reduce the dialdehyde protein-binding form of aflatoxin B1 (AFB1) to the non-binding AFB1 dialcohol. Acts as a 2-carboxybenzaldehyde reductase.</text>
</comment>
<comment type="catalytic activity">
    <reaction>
        <text>4-hydroxybutanoate + NADP(+) = succinate semialdehyde + NADPH + H(+)</text>
        <dbReference type="Rhea" id="RHEA:26381"/>
        <dbReference type="ChEBI" id="CHEBI:15378"/>
        <dbReference type="ChEBI" id="CHEBI:16724"/>
        <dbReference type="ChEBI" id="CHEBI:57706"/>
        <dbReference type="ChEBI" id="CHEBI:57783"/>
        <dbReference type="ChEBI" id="CHEBI:58349"/>
        <dbReference type="EC" id="1.1.1.n11"/>
    </reaction>
</comment>
<comment type="biophysicochemical properties">
    <kinetics>
        <text>Has a low KM for succinic semialdehyde.</text>
    </kinetics>
</comment>
<comment type="subunit">
    <text evidence="5">Homodimer. Heterodimer with AKR7A1.</text>
</comment>
<comment type="subcellular location">
    <subcellularLocation>
        <location evidence="3">Mitochondrion</location>
    </subcellularLocation>
    <subcellularLocation>
        <location evidence="5">Golgi apparatus</location>
        <location evidence="5">Golgi stack</location>
    </subcellularLocation>
    <subcellularLocation>
        <location evidence="5">Cytoplasm</location>
    </subcellularLocation>
    <text evidence="6">Its association with the Golgi stack may facilitate secretion of GHB.</text>
</comment>
<comment type="miscellaneous">
    <text>With 4-nitrobenzaldehyde as substrate, it exhibits a substantially greater specific activity with NADPH than with NADH. Conversely, it has a 1.8-fold higher activity towards succinic semialdehyde with NADH than with NADPH.</text>
</comment>
<comment type="similarity">
    <text evidence="7">Belongs to the aldo/keto reductase family. Aldo/keto reductase 2 subfamily.</text>
</comment>
<comment type="sequence caution" evidence="7">
    <conflict type="erroneous initiation">
        <sequence resource="EMBL-CDS" id="AAH61816"/>
    </conflict>
</comment>
<comment type="sequence caution" evidence="7">
    <conflict type="erroneous initiation">
        <sequence resource="EMBL-CDS" id="BAA90396"/>
    </conflict>
</comment>
<comment type="sequence caution" evidence="7">
    <conflict type="erroneous initiation">
        <sequence resource="EMBL-CDS" id="CAC81080"/>
    </conflict>
</comment>
<gene>
    <name type="primary">Akr7a2</name>
    <name type="synonym">Afar2</name>
    <name type="synonym">Aiar</name>
</gene>
<evidence type="ECO:0000250" key="1"/>
<evidence type="ECO:0000250" key="2">
    <source>
        <dbReference type="UniProtKB" id="Q8CG76"/>
    </source>
</evidence>
<evidence type="ECO:0000255" key="3"/>
<evidence type="ECO:0000256" key="4">
    <source>
        <dbReference type="SAM" id="MobiDB-lite"/>
    </source>
</evidence>
<evidence type="ECO:0000269" key="5">
    <source>
    </source>
</evidence>
<evidence type="ECO:0000303" key="6">
    <source>
    </source>
</evidence>
<evidence type="ECO:0000305" key="7"/>
<evidence type="ECO:0007744" key="8">
    <source>
    </source>
</evidence>
<organism>
    <name type="scientific">Rattus norvegicus</name>
    <name type="common">Rat</name>
    <dbReference type="NCBI Taxonomy" id="10116"/>
    <lineage>
        <taxon>Eukaryota</taxon>
        <taxon>Metazoa</taxon>
        <taxon>Chordata</taxon>
        <taxon>Craniata</taxon>
        <taxon>Vertebrata</taxon>
        <taxon>Euteleostomi</taxon>
        <taxon>Mammalia</taxon>
        <taxon>Eutheria</taxon>
        <taxon>Euarchontoglires</taxon>
        <taxon>Glires</taxon>
        <taxon>Rodentia</taxon>
        <taxon>Myomorpha</taxon>
        <taxon>Muroidea</taxon>
        <taxon>Muridae</taxon>
        <taxon>Murinae</taxon>
        <taxon>Rattus</taxon>
    </lineage>
</organism>
<accession>Q8CG45</accession>
<accession>Q6P765</accession>
<accession>Q8K435</accession>
<accession>Q9JM82</accession>
<dbReference type="EC" id="1.1.1.n11"/>
<dbReference type="EMBL" id="AF503514">
    <property type="protein sequence ID" value="AAN03824.1"/>
    <property type="molecule type" value="mRNA"/>
</dbReference>
<dbReference type="EMBL" id="BC061816">
    <property type="protein sequence ID" value="AAH61816.1"/>
    <property type="status" value="ALT_INIT"/>
    <property type="molecule type" value="mRNA"/>
</dbReference>
<dbReference type="EMBL" id="AJ271883">
    <property type="protein sequence ID" value="CAC81080.1"/>
    <property type="status" value="ALT_INIT"/>
    <property type="molecule type" value="mRNA"/>
</dbReference>
<dbReference type="EMBL" id="AB037424">
    <property type="protein sequence ID" value="BAA90396.1"/>
    <property type="status" value="ALT_INIT"/>
    <property type="molecule type" value="mRNA"/>
</dbReference>
<dbReference type="RefSeq" id="NP_599234.1">
    <property type="nucleotide sequence ID" value="NM_134407.1"/>
</dbReference>
<dbReference type="SMR" id="Q8CG45"/>
<dbReference type="BioGRID" id="251255">
    <property type="interactions" value="1"/>
</dbReference>
<dbReference type="FunCoup" id="Q8CG45">
    <property type="interactions" value="1210"/>
</dbReference>
<dbReference type="STRING" id="10116.ENSRNOP00000024063"/>
<dbReference type="iPTMnet" id="Q8CG45"/>
<dbReference type="PhosphoSitePlus" id="Q8CG45"/>
<dbReference type="jPOST" id="Q8CG45"/>
<dbReference type="PaxDb" id="10116-ENSRNOP00000024063"/>
<dbReference type="GeneID" id="171445"/>
<dbReference type="KEGG" id="rno:171445"/>
<dbReference type="UCSC" id="RGD:620311">
    <property type="organism name" value="rat"/>
</dbReference>
<dbReference type="AGR" id="RGD:620311"/>
<dbReference type="CTD" id="8574"/>
<dbReference type="RGD" id="620311">
    <property type="gene designation" value="Akr7a2"/>
</dbReference>
<dbReference type="eggNOG" id="ENOG502QU2T">
    <property type="taxonomic scope" value="Eukaryota"/>
</dbReference>
<dbReference type="InParanoid" id="Q8CG45"/>
<dbReference type="OrthoDB" id="48988at2759"/>
<dbReference type="PhylomeDB" id="Q8CG45"/>
<dbReference type="TreeFam" id="TF329173"/>
<dbReference type="Reactome" id="R-RNO-5423646">
    <property type="pathway name" value="Aflatoxin activation and detoxification"/>
</dbReference>
<dbReference type="SABIO-RK" id="Q8CG45"/>
<dbReference type="PRO" id="PR:Q8CG45"/>
<dbReference type="Proteomes" id="UP000002494">
    <property type="component" value="Unplaced"/>
</dbReference>
<dbReference type="GO" id="GO:0005737">
    <property type="term" value="C:cytoplasm"/>
    <property type="evidence" value="ECO:0000318"/>
    <property type="project" value="GO_Central"/>
</dbReference>
<dbReference type="GO" id="GO:0005795">
    <property type="term" value="C:Golgi stack"/>
    <property type="evidence" value="ECO:0007669"/>
    <property type="project" value="UniProtKB-SubCell"/>
</dbReference>
<dbReference type="GO" id="GO:0005739">
    <property type="term" value="C:mitochondrion"/>
    <property type="evidence" value="ECO:0007669"/>
    <property type="project" value="UniProtKB-SubCell"/>
</dbReference>
<dbReference type="GO" id="GO:0005635">
    <property type="term" value="C:nuclear envelope"/>
    <property type="evidence" value="ECO:0000314"/>
    <property type="project" value="RGD"/>
</dbReference>
<dbReference type="GO" id="GO:0004033">
    <property type="term" value="F:aldo-keto reductase (NADPH) activity"/>
    <property type="evidence" value="ECO:0000318"/>
    <property type="project" value="GO_Central"/>
</dbReference>
<dbReference type="GO" id="GO:0004032">
    <property type="term" value="F:aldose reductase (NADPH) activity"/>
    <property type="evidence" value="ECO:0000314"/>
    <property type="project" value="RGD"/>
</dbReference>
<dbReference type="GO" id="GO:0019119">
    <property type="term" value="F:phenanthrene-9,10-epoxide hydrolase activity"/>
    <property type="evidence" value="ECO:0000266"/>
    <property type="project" value="RGD"/>
</dbReference>
<dbReference type="GO" id="GO:0044597">
    <property type="term" value="P:daunorubicin metabolic process"/>
    <property type="evidence" value="ECO:0000266"/>
    <property type="project" value="RGD"/>
</dbReference>
<dbReference type="GO" id="GO:0044598">
    <property type="term" value="P:doxorubicin metabolic process"/>
    <property type="evidence" value="ECO:0000266"/>
    <property type="project" value="RGD"/>
</dbReference>
<dbReference type="GO" id="GO:0006629">
    <property type="term" value="P:lipid metabolic process"/>
    <property type="evidence" value="ECO:0007669"/>
    <property type="project" value="UniProtKB-KW"/>
</dbReference>
<dbReference type="CDD" id="cd19075">
    <property type="entry name" value="AKR_AKR7A1-5"/>
    <property type="match status" value="1"/>
</dbReference>
<dbReference type="FunFam" id="3.20.20.100:FF:000017">
    <property type="entry name" value="Aflatoxin B1 aldehyde reductase member 2"/>
    <property type="match status" value="1"/>
</dbReference>
<dbReference type="Gene3D" id="3.20.20.100">
    <property type="entry name" value="NADP-dependent oxidoreductase domain"/>
    <property type="match status" value="1"/>
</dbReference>
<dbReference type="InterPro" id="IPR050523">
    <property type="entry name" value="AKR_Detox_Biosynth"/>
</dbReference>
<dbReference type="InterPro" id="IPR023210">
    <property type="entry name" value="NADP_OxRdtase_dom"/>
</dbReference>
<dbReference type="InterPro" id="IPR036812">
    <property type="entry name" value="NADP_OxRdtase_dom_sf"/>
</dbReference>
<dbReference type="PANTHER" id="PTHR43364:SF4">
    <property type="entry name" value="NAD(P)-LINKED OXIDOREDUCTASE SUPERFAMILY PROTEIN"/>
    <property type="match status" value="1"/>
</dbReference>
<dbReference type="PANTHER" id="PTHR43364">
    <property type="entry name" value="NADH-SPECIFIC METHYLGLYOXAL REDUCTASE-RELATED"/>
    <property type="match status" value="1"/>
</dbReference>
<dbReference type="Pfam" id="PF00248">
    <property type="entry name" value="Aldo_ket_red"/>
    <property type="match status" value="1"/>
</dbReference>
<dbReference type="SUPFAM" id="SSF51430">
    <property type="entry name" value="NAD(P)-linked oxidoreductase"/>
    <property type="match status" value="1"/>
</dbReference>
<protein>
    <recommendedName>
        <fullName>Aflatoxin B1 aldehyde reductase member 2</fullName>
        <shortName>rAFAR2</shortName>
        <ecNumber>1.1.1.n11</ecNumber>
    </recommendedName>
    <alternativeName>
        <fullName>Succinic semialdehyde reductase</fullName>
        <shortName>SSA reductase</shortName>
    </alternativeName>
</protein>
<feature type="transit peptide" description="Mitochondrion" evidence="3">
    <location>
        <begin position="1"/>
        <end position="46"/>
    </location>
</feature>
<feature type="chain" id="PRO_0000070377" description="Aflatoxin B1 aldehyde reductase member 2">
    <location>
        <begin position="47"/>
        <end position="367"/>
    </location>
</feature>
<feature type="region of interest" description="Disordered" evidence="4">
    <location>
        <begin position="27"/>
        <end position="46"/>
    </location>
</feature>
<feature type="active site" description="Proton donor" evidence="1">
    <location>
        <position position="85"/>
    </location>
</feature>
<feature type="binding site" evidence="1">
    <location>
        <position position="80"/>
    </location>
    <ligand>
        <name>NADP(+)</name>
        <dbReference type="ChEBI" id="CHEBI:58349"/>
    </ligand>
</feature>
<feature type="binding site" evidence="1">
    <location>
        <position position="149"/>
    </location>
    <ligand>
        <name>substrate</name>
    </ligand>
</feature>
<feature type="binding site" evidence="1">
    <location>
        <begin position="179"/>
        <end position="180"/>
    </location>
    <ligand>
        <name>NADP(+)</name>
        <dbReference type="ChEBI" id="CHEBI:58349"/>
    </ligand>
</feature>
<feature type="binding site" evidence="1">
    <location>
        <position position="205"/>
    </location>
    <ligand>
        <name>NADP(+)</name>
        <dbReference type="ChEBI" id="CHEBI:58349"/>
    </ligand>
</feature>
<feature type="binding site" evidence="1">
    <location>
        <begin position="234"/>
        <end position="244"/>
    </location>
    <ligand>
        <name>NADP(+)</name>
        <dbReference type="ChEBI" id="CHEBI:58349"/>
    </ligand>
</feature>
<feature type="binding site" evidence="1">
    <location>
        <position position="258"/>
    </location>
    <ligand>
        <name>NADP(+)</name>
        <dbReference type="ChEBI" id="CHEBI:58349"/>
    </ligand>
</feature>
<feature type="binding site" evidence="1">
    <location>
        <position position="268"/>
    </location>
    <ligand>
        <name>substrate</name>
    </ligand>
</feature>
<feature type="binding site" evidence="1">
    <location>
        <position position="271"/>
    </location>
    <ligand>
        <name>substrate</name>
    </ligand>
</feature>
<feature type="binding site" evidence="1">
    <location>
        <begin position="326"/>
        <end position="334"/>
    </location>
    <ligand>
        <name>NADP(+)</name>
        <dbReference type="ChEBI" id="CHEBI:58349"/>
    </ligand>
</feature>
<feature type="binding site" evidence="1">
    <location>
        <position position="367"/>
    </location>
    <ligand>
        <name>substrate</name>
    </ligand>
</feature>
<feature type="site" description="Lowers pKa of active site Tyr" evidence="1">
    <location>
        <position position="113"/>
    </location>
</feature>
<feature type="modified residue" description="Phosphoserine" evidence="2">
    <location>
        <position position="40"/>
    </location>
</feature>
<feature type="modified residue" description="Phosphothreonine" evidence="2">
    <location>
        <position position="48"/>
    </location>
</feature>
<feature type="modified residue" description="N6-acetyllysine" evidence="2">
    <location>
        <position position="136"/>
    </location>
</feature>
<feature type="modified residue" description="N6-succinyllysine" evidence="2">
    <location>
        <position position="244"/>
    </location>
</feature>
<feature type="modified residue" description="Phosphoserine" evidence="8">
    <location>
        <position position="263"/>
    </location>
</feature>
<feature type="sequence conflict" description="In Ref. 1; AAN03824." evidence="7" ref="1">
    <original>K</original>
    <variation>N</variation>
    <location>
        <position position="136"/>
    </location>
</feature>
<feature type="sequence conflict" description="In Ref. 1; AAN03824." evidence="7" ref="1">
    <original>S</original>
    <variation>D</variation>
    <location>
        <position position="295"/>
    </location>
</feature>
<feature type="sequence conflict" description="In Ref. 3; CAC81080." evidence="7" ref="3">
    <original>MT</original>
    <variation>ND</variation>
    <location>
        <begin position="299"/>
        <end position="300"/>
    </location>
</feature>
<proteinExistence type="evidence at protein level"/>
<reference key="1">
    <citation type="journal article" date="2002" name="Biochem. J.">
        <title>Novel homodimeric and heterodimeric rat gamma-hydroxybutyrate synthases that associate with the Golgi apparatus define a distinct subclass of aldo-keto reductase 7 family proteins.</title>
        <authorList>
            <person name="Kelly V.P."/>
            <person name="Sherratt P.J."/>
            <person name="Crouch D.H."/>
            <person name="Hayes J.D."/>
        </authorList>
    </citation>
    <scope>NUCLEOTIDE SEQUENCE [MRNA]</scope>
    <scope>PROTEIN SEQUENCE OF 4-14 AND 33-44</scope>
    <scope>FUNCTION</scope>
    <scope>SUBUNIT</scope>
    <scope>SUBCELLULAR LOCATION</scope>
    <source>
        <strain>Fischer 344</strain>
        <tissue>Liver</tissue>
    </source>
</reference>
<reference key="2">
    <citation type="journal article" date="2004" name="Genome Res.">
        <title>The status, quality, and expansion of the NIH full-length cDNA project: the Mammalian Gene Collection (MGC).</title>
        <authorList>
            <consortium name="The MGC Project Team"/>
        </authorList>
    </citation>
    <scope>NUCLEOTIDE SEQUENCE [LARGE SCALE MRNA] OF 11-367</scope>
    <source>
        <tissue>Prostate</tissue>
    </source>
</reference>
<reference key="3">
    <citation type="journal article" date="2003" name="Oncogene">
        <title>Aflatoxin B1 aldehyde reductase (AFAR) genes cluster at 1p35-1p36.1 in a region frequently altered in human tumour cells.</title>
        <authorList>
            <person name="Praml C."/>
            <person name="Savelyeva L."/>
            <person name="Schwab M."/>
        </authorList>
    </citation>
    <scope>NUCLEOTIDE SEQUENCE [MRNA] OF 11-367</scope>
</reference>
<reference key="4">
    <citation type="journal article" date="2000" name="Endocrinology">
        <title>Androgen-regulated expression of a novel member of the aldo-keto reductase superfamily in regrowing rat prostate.</title>
        <authorList>
            <person name="Nishi N."/>
            <person name="Shoji H."/>
            <person name="Miyanaka H."/>
            <person name="Nakamura T."/>
        </authorList>
    </citation>
    <scope>NUCLEOTIDE SEQUENCE [MRNA] OF 12-367</scope>
    <source>
        <strain>Sprague-Dawley</strain>
    </source>
</reference>
<reference key="5">
    <citation type="submission" date="2006-11" db="UniProtKB">
        <authorList>
            <person name="Lubec G."/>
            <person name="Afjehi-Sadat L."/>
        </authorList>
    </citation>
    <scope>PROTEIN SEQUENCE OF 230-244; 259-269 AND 306-317</scope>
    <scope>IDENTIFICATION BY MASS SPECTROMETRY</scope>
    <source>
        <strain>Sprague-Dawley</strain>
        <tissue>Spinal cord</tissue>
    </source>
</reference>
<reference key="6">
    <citation type="journal article" date="2012" name="Nat. Commun.">
        <title>Quantitative maps of protein phosphorylation sites across 14 different rat organs and tissues.</title>
        <authorList>
            <person name="Lundby A."/>
            <person name="Secher A."/>
            <person name="Lage K."/>
            <person name="Nordsborg N.B."/>
            <person name="Dmytriyev A."/>
            <person name="Lundby C."/>
            <person name="Olsen J.V."/>
        </authorList>
    </citation>
    <scope>PHOSPHORYLATION [LARGE SCALE ANALYSIS] AT SER-263</scope>
    <scope>IDENTIFICATION BY MASS SPECTROMETRY [LARGE SCALE ANALYSIS]</scope>
</reference>
<sequence>MLRAVSRAVSRAAVRCAWRSGPSVARPLAMSRSPAPRAVSGAPLRPGTVLGTMEMGRRMDASASAATVRAFLERGLNELDTAFMYCDGQSESILGSLGLGLGSGDCTVKIATKANPWDGKSLKPDSVRSQLETSLKRLQCPRVDLFYLHAPDHGTPIVETLQACQQLHQEGKFVELGLSNYASWEVAEIYTLCKSNGWILPTVYQGMYNATTRQVETELLPCLRYFGLRFYAYNPLAGGLLTGKYRYEDKDGKQPEGRFFGNSWSETYRNRFWKEHHFEAIALVEKALKTTYGTSAPSMTSAALRWMYHHSQLQGTRGDAVILGMSSLEQLEQNLAATEEGPLEPAVVEAFNQAWNVVAHECPNYFR</sequence>